<protein>
    <recommendedName>
        <fullName evidence="1">Imidazoleglycerol-phosphate dehydratase</fullName>
        <shortName evidence="1">IGPD</shortName>
        <ecNumber evidence="1">4.2.1.19</ecNumber>
    </recommendedName>
</protein>
<gene>
    <name evidence="1" type="primary">hisB</name>
    <name type="ordered locus">llmg_1294</name>
</gene>
<proteinExistence type="inferred from homology"/>
<keyword id="KW-0028">Amino-acid biosynthesis</keyword>
<keyword id="KW-0963">Cytoplasm</keyword>
<keyword id="KW-0368">Histidine biosynthesis</keyword>
<keyword id="KW-0456">Lyase</keyword>
<sequence length="199" mass="22024">MRTATITRETKETQIYLTLDLDGSGRSEIDTNIGFLDHMLTLLAFHSDFDIKLTAHGDHENSGMDPHHLIEDVAISLGKCINEALGDKLGIRRYGSFTIPMDEALVTCDLDISGRPYLVFNADLSGNKKLGGYDTEMTEEFFRALAFNAGITLHLNEHYGKNTHHIIEGIFKSMARALKQAISIDETKVGKIPSSKGVL</sequence>
<feature type="chain" id="PRO_1000010285" description="Imidazoleglycerol-phosphate dehydratase">
    <location>
        <begin position="1"/>
        <end position="199"/>
    </location>
</feature>
<comment type="catalytic activity">
    <reaction evidence="1">
        <text>D-erythro-1-(imidazol-4-yl)glycerol 3-phosphate = 3-(imidazol-4-yl)-2-oxopropyl phosphate + H2O</text>
        <dbReference type="Rhea" id="RHEA:11040"/>
        <dbReference type="ChEBI" id="CHEBI:15377"/>
        <dbReference type="ChEBI" id="CHEBI:57766"/>
        <dbReference type="ChEBI" id="CHEBI:58278"/>
        <dbReference type="EC" id="4.2.1.19"/>
    </reaction>
</comment>
<comment type="pathway">
    <text evidence="1">Amino-acid biosynthesis; L-histidine biosynthesis; L-histidine from 5-phospho-alpha-D-ribose 1-diphosphate: step 6/9.</text>
</comment>
<comment type="subcellular location">
    <subcellularLocation>
        <location evidence="1">Cytoplasm</location>
    </subcellularLocation>
</comment>
<comment type="similarity">
    <text evidence="1">Belongs to the imidazoleglycerol-phosphate dehydratase family.</text>
</comment>
<organism>
    <name type="scientific">Lactococcus lactis subsp. cremoris (strain MG1363)</name>
    <dbReference type="NCBI Taxonomy" id="416870"/>
    <lineage>
        <taxon>Bacteria</taxon>
        <taxon>Bacillati</taxon>
        <taxon>Bacillota</taxon>
        <taxon>Bacilli</taxon>
        <taxon>Lactobacillales</taxon>
        <taxon>Streptococcaceae</taxon>
        <taxon>Lactococcus</taxon>
        <taxon>Lactococcus cremoris subsp. cremoris</taxon>
    </lineage>
</organism>
<accession>A2RKS1</accession>
<dbReference type="EC" id="4.2.1.19" evidence="1"/>
<dbReference type="EMBL" id="AM406671">
    <property type="protein sequence ID" value="CAL97887.1"/>
    <property type="molecule type" value="Genomic_DNA"/>
</dbReference>
<dbReference type="RefSeq" id="WP_011835171.1">
    <property type="nucleotide sequence ID" value="NC_009004.1"/>
</dbReference>
<dbReference type="SMR" id="A2RKS1"/>
<dbReference type="STRING" id="416870.llmg_1294"/>
<dbReference type="KEGG" id="llm:llmg_1294"/>
<dbReference type="eggNOG" id="COG0131">
    <property type="taxonomic scope" value="Bacteria"/>
</dbReference>
<dbReference type="HOGENOM" id="CLU_044308_2_0_9"/>
<dbReference type="OrthoDB" id="9790411at2"/>
<dbReference type="PhylomeDB" id="A2RKS1"/>
<dbReference type="UniPathway" id="UPA00031">
    <property type="reaction ID" value="UER00011"/>
</dbReference>
<dbReference type="Proteomes" id="UP000000364">
    <property type="component" value="Chromosome"/>
</dbReference>
<dbReference type="GO" id="GO:0005737">
    <property type="term" value="C:cytoplasm"/>
    <property type="evidence" value="ECO:0007669"/>
    <property type="project" value="UniProtKB-SubCell"/>
</dbReference>
<dbReference type="GO" id="GO:0004424">
    <property type="term" value="F:imidazoleglycerol-phosphate dehydratase activity"/>
    <property type="evidence" value="ECO:0007669"/>
    <property type="project" value="UniProtKB-UniRule"/>
</dbReference>
<dbReference type="GO" id="GO:0000105">
    <property type="term" value="P:L-histidine biosynthetic process"/>
    <property type="evidence" value="ECO:0007669"/>
    <property type="project" value="UniProtKB-UniRule"/>
</dbReference>
<dbReference type="CDD" id="cd07914">
    <property type="entry name" value="IGPD"/>
    <property type="match status" value="1"/>
</dbReference>
<dbReference type="FunFam" id="3.30.230.40:FF:000001">
    <property type="entry name" value="Imidazoleglycerol-phosphate dehydratase HisB"/>
    <property type="match status" value="1"/>
</dbReference>
<dbReference type="FunFam" id="3.30.230.40:FF:000003">
    <property type="entry name" value="Imidazoleglycerol-phosphate dehydratase HisB"/>
    <property type="match status" value="1"/>
</dbReference>
<dbReference type="Gene3D" id="3.30.230.40">
    <property type="entry name" value="Imidazole glycerol phosphate dehydratase, domain 1"/>
    <property type="match status" value="2"/>
</dbReference>
<dbReference type="HAMAP" id="MF_00076">
    <property type="entry name" value="HisB"/>
    <property type="match status" value="1"/>
</dbReference>
<dbReference type="InterPro" id="IPR038494">
    <property type="entry name" value="IGPD_sf"/>
</dbReference>
<dbReference type="InterPro" id="IPR000807">
    <property type="entry name" value="ImidazoleglycerolP_deHydtase"/>
</dbReference>
<dbReference type="InterPro" id="IPR020565">
    <property type="entry name" value="ImidazoleglycerP_deHydtase_CS"/>
</dbReference>
<dbReference type="InterPro" id="IPR020568">
    <property type="entry name" value="Ribosomal_Su5_D2-typ_SF"/>
</dbReference>
<dbReference type="NCBIfam" id="NF002111">
    <property type="entry name" value="PRK00951.2-1"/>
    <property type="match status" value="1"/>
</dbReference>
<dbReference type="NCBIfam" id="NF002114">
    <property type="entry name" value="PRK00951.2-4"/>
    <property type="match status" value="1"/>
</dbReference>
<dbReference type="PANTHER" id="PTHR23133:SF2">
    <property type="entry name" value="IMIDAZOLEGLYCEROL-PHOSPHATE DEHYDRATASE"/>
    <property type="match status" value="1"/>
</dbReference>
<dbReference type="PANTHER" id="PTHR23133">
    <property type="entry name" value="IMIDAZOLEGLYCEROL-PHOSPHATE DEHYDRATASE HIS7"/>
    <property type="match status" value="1"/>
</dbReference>
<dbReference type="Pfam" id="PF00475">
    <property type="entry name" value="IGPD"/>
    <property type="match status" value="1"/>
</dbReference>
<dbReference type="SUPFAM" id="SSF54211">
    <property type="entry name" value="Ribosomal protein S5 domain 2-like"/>
    <property type="match status" value="2"/>
</dbReference>
<dbReference type="PROSITE" id="PS00954">
    <property type="entry name" value="IGP_DEHYDRATASE_1"/>
    <property type="match status" value="1"/>
</dbReference>
<dbReference type="PROSITE" id="PS00955">
    <property type="entry name" value="IGP_DEHYDRATASE_2"/>
    <property type="match status" value="1"/>
</dbReference>
<reference key="1">
    <citation type="journal article" date="2007" name="J. Bacteriol.">
        <title>The complete genome sequence of the lactic acid bacterial paradigm Lactococcus lactis subsp. cremoris MG1363.</title>
        <authorList>
            <person name="Wegmann U."/>
            <person name="O'Connell-Motherway M."/>
            <person name="Zomer A."/>
            <person name="Buist G."/>
            <person name="Shearman C."/>
            <person name="Canchaya C."/>
            <person name="Ventura M."/>
            <person name="Goesmann A."/>
            <person name="Gasson M.J."/>
            <person name="Kuipers O.P."/>
            <person name="van Sinderen D."/>
            <person name="Kok J."/>
        </authorList>
    </citation>
    <scope>NUCLEOTIDE SEQUENCE [LARGE SCALE GENOMIC DNA]</scope>
    <source>
        <strain>MG1363</strain>
    </source>
</reference>
<name>HIS7_LACLM</name>
<evidence type="ECO:0000255" key="1">
    <source>
        <dbReference type="HAMAP-Rule" id="MF_00076"/>
    </source>
</evidence>